<organism>
    <name type="scientific">Rhizobium meliloti (strain 1021)</name>
    <name type="common">Ensifer meliloti</name>
    <name type="synonym">Sinorhizobium meliloti</name>
    <dbReference type="NCBI Taxonomy" id="266834"/>
    <lineage>
        <taxon>Bacteria</taxon>
        <taxon>Pseudomonadati</taxon>
        <taxon>Pseudomonadota</taxon>
        <taxon>Alphaproteobacteria</taxon>
        <taxon>Hyphomicrobiales</taxon>
        <taxon>Rhizobiaceae</taxon>
        <taxon>Sinorhizobium/Ensifer group</taxon>
        <taxon>Sinorhizobium</taxon>
    </lineage>
</organism>
<name>RL18_RHIME</name>
<protein>
    <recommendedName>
        <fullName evidence="1">Large ribosomal subunit protein uL18</fullName>
    </recommendedName>
    <alternativeName>
        <fullName evidence="2">50S ribosomal protein L18</fullName>
    </alternativeName>
</protein>
<proteinExistence type="inferred from homology"/>
<sequence>MASRKDTLVRRASRVRRQIKAVANGRPRLSVHRSSKNIYAQIIDDVAGKTIASASTLDTDLRSSLKTGADTEAATAVGKLLAERASKAGIKDVVFDRGAFIYHGRIKALAEAAREGGLNF</sequence>
<feature type="chain" id="PRO_0000131327" description="Large ribosomal subunit protein uL18">
    <location>
        <begin position="1"/>
        <end position="120"/>
    </location>
</feature>
<keyword id="KW-1185">Reference proteome</keyword>
<keyword id="KW-0687">Ribonucleoprotein</keyword>
<keyword id="KW-0689">Ribosomal protein</keyword>
<keyword id="KW-0694">RNA-binding</keyword>
<keyword id="KW-0699">rRNA-binding</keyword>
<comment type="function">
    <text evidence="1">This is one of the proteins that bind and probably mediate the attachment of the 5S RNA into the large ribosomal subunit, where it forms part of the central protuberance.</text>
</comment>
<comment type="subunit">
    <text evidence="1">Part of the 50S ribosomal subunit; part of the 5S rRNA/L5/L18/L25 subcomplex. Contacts the 5S and 23S rRNAs.</text>
</comment>
<comment type="similarity">
    <text evidence="1">Belongs to the universal ribosomal protein uL18 family.</text>
</comment>
<accession>Q92QF4</accession>
<gene>
    <name evidence="1" type="primary">rplR</name>
    <name type="ordered locus">R01372</name>
    <name type="ORF">SMc01293</name>
</gene>
<evidence type="ECO:0000255" key="1">
    <source>
        <dbReference type="HAMAP-Rule" id="MF_01337"/>
    </source>
</evidence>
<evidence type="ECO:0000305" key="2"/>
<reference key="1">
    <citation type="journal article" date="2001" name="Proc. Natl. Acad. Sci. U.S.A.">
        <title>Analysis of the chromosome sequence of the legume symbiont Sinorhizobium meliloti strain 1021.</title>
        <authorList>
            <person name="Capela D."/>
            <person name="Barloy-Hubler F."/>
            <person name="Gouzy J."/>
            <person name="Bothe G."/>
            <person name="Ampe F."/>
            <person name="Batut J."/>
            <person name="Boistard P."/>
            <person name="Becker A."/>
            <person name="Boutry M."/>
            <person name="Cadieu E."/>
            <person name="Dreano S."/>
            <person name="Gloux S."/>
            <person name="Godrie T."/>
            <person name="Goffeau A."/>
            <person name="Kahn D."/>
            <person name="Kiss E."/>
            <person name="Lelaure V."/>
            <person name="Masuy D."/>
            <person name="Pohl T."/>
            <person name="Portetelle D."/>
            <person name="Puehler A."/>
            <person name="Purnelle B."/>
            <person name="Ramsperger U."/>
            <person name="Renard C."/>
            <person name="Thebault P."/>
            <person name="Vandenbol M."/>
            <person name="Weidner S."/>
            <person name="Galibert F."/>
        </authorList>
    </citation>
    <scope>NUCLEOTIDE SEQUENCE [LARGE SCALE GENOMIC DNA]</scope>
    <source>
        <strain>1021</strain>
    </source>
</reference>
<reference key="2">
    <citation type="journal article" date="2001" name="Science">
        <title>The composite genome of the legume symbiont Sinorhizobium meliloti.</title>
        <authorList>
            <person name="Galibert F."/>
            <person name="Finan T.M."/>
            <person name="Long S.R."/>
            <person name="Puehler A."/>
            <person name="Abola P."/>
            <person name="Ampe F."/>
            <person name="Barloy-Hubler F."/>
            <person name="Barnett M.J."/>
            <person name="Becker A."/>
            <person name="Boistard P."/>
            <person name="Bothe G."/>
            <person name="Boutry M."/>
            <person name="Bowser L."/>
            <person name="Buhrmester J."/>
            <person name="Cadieu E."/>
            <person name="Capela D."/>
            <person name="Chain P."/>
            <person name="Cowie A."/>
            <person name="Davis R.W."/>
            <person name="Dreano S."/>
            <person name="Federspiel N.A."/>
            <person name="Fisher R.F."/>
            <person name="Gloux S."/>
            <person name="Godrie T."/>
            <person name="Goffeau A."/>
            <person name="Golding B."/>
            <person name="Gouzy J."/>
            <person name="Gurjal M."/>
            <person name="Hernandez-Lucas I."/>
            <person name="Hong A."/>
            <person name="Huizar L."/>
            <person name="Hyman R.W."/>
            <person name="Jones T."/>
            <person name="Kahn D."/>
            <person name="Kahn M.L."/>
            <person name="Kalman S."/>
            <person name="Keating D.H."/>
            <person name="Kiss E."/>
            <person name="Komp C."/>
            <person name="Lelaure V."/>
            <person name="Masuy D."/>
            <person name="Palm C."/>
            <person name="Peck M.C."/>
            <person name="Pohl T.M."/>
            <person name="Portetelle D."/>
            <person name="Purnelle B."/>
            <person name="Ramsperger U."/>
            <person name="Surzycki R."/>
            <person name="Thebault P."/>
            <person name="Vandenbol M."/>
            <person name="Vorhoelter F.J."/>
            <person name="Weidner S."/>
            <person name="Wells D.H."/>
            <person name="Wong K."/>
            <person name="Yeh K.-C."/>
            <person name="Batut J."/>
        </authorList>
    </citation>
    <scope>NUCLEOTIDE SEQUENCE [LARGE SCALE GENOMIC DNA]</scope>
    <source>
        <strain>1021</strain>
    </source>
</reference>
<dbReference type="EMBL" id="AL591688">
    <property type="protein sequence ID" value="CAC45951.1"/>
    <property type="molecule type" value="Genomic_DNA"/>
</dbReference>
<dbReference type="RefSeq" id="NP_385478.1">
    <property type="nucleotide sequence ID" value="NC_003047.1"/>
</dbReference>
<dbReference type="RefSeq" id="WP_003536512.1">
    <property type="nucleotide sequence ID" value="NC_003047.1"/>
</dbReference>
<dbReference type="SMR" id="Q92QF4"/>
<dbReference type="EnsemblBacteria" id="CAC45951">
    <property type="protein sequence ID" value="CAC45951"/>
    <property type="gene ID" value="SMc01293"/>
</dbReference>
<dbReference type="GeneID" id="89575696"/>
<dbReference type="KEGG" id="sme:SMc01293"/>
<dbReference type="PATRIC" id="fig|266834.11.peg.2788"/>
<dbReference type="eggNOG" id="COG0256">
    <property type="taxonomic scope" value="Bacteria"/>
</dbReference>
<dbReference type="HOGENOM" id="CLU_098841_0_1_5"/>
<dbReference type="OrthoDB" id="9810939at2"/>
<dbReference type="Proteomes" id="UP000001976">
    <property type="component" value="Chromosome"/>
</dbReference>
<dbReference type="GO" id="GO:0022625">
    <property type="term" value="C:cytosolic large ribosomal subunit"/>
    <property type="evidence" value="ECO:0007669"/>
    <property type="project" value="TreeGrafter"/>
</dbReference>
<dbReference type="GO" id="GO:0008097">
    <property type="term" value="F:5S rRNA binding"/>
    <property type="evidence" value="ECO:0007669"/>
    <property type="project" value="TreeGrafter"/>
</dbReference>
<dbReference type="GO" id="GO:0003735">
    <property type="term" value="F:structural constituent of ribosome"/>
    <property type="evidence" value="ECO:0007669"/>
    <property type="project" value="InterPro"/>
</dbReference>
<dbReference type="GO" id="GO:0006412">
    <property type="term" value="P:translation"/>
    <property type="evidence" value="ECO:0007669"/>
    <property type="project" value="UniProtKB-UniRule"/>
</dbReference>
<dbReference type="CDD" id="cd00432">
    <property type="entry name" value="Ribosomal_L18_L5e"/>
    <property type="match status" value="1"/>
</dbReference>
<dbReference type="FunFam" id="3.30.420.100:FF:000001">
    <property type="entry name" value="50S ribosomal protein L18"/>
    <property type="match status" value="1"/>
</dbReference>
<dbReference type="Gene3D" id="3.30.420.100">
    <property type="match status" value="1"/>
</dbReference>
<dbReference type="HAMAP" id="MF_01337_B">
    <property type="entry name" value="Ribosomal_uL18_B"/>
    <property type="match status" value="1"/>
</dbReference>
<dbReference type="InterPro" id="IPR004389">
    <property type="entry name" value="Ribosomal_uL18_bac-type"/>
</dbReference>
<dbReference type="InterPro" id="IPR005484">
    <property type="entry name" value="Ribosomal_uL18_bac/euk"/>
</dbReference>
<dbReference type="NCBIfam" id="TIGR00060">
    <property type="entry name" value="L18_bact"/>
    <property type="match status" value="1"/>
</dbReference>
<dbReference type="PANTHER" id="PTHR12899">
    <property type="entry name" value="39S RIBOSOMAL PROTEIN L18, MITOCHONDRIAL"/>
    <property type="match status" value="1"/>
</dbReference>
<dbReference type="PANTHER" id="PTHR12899:SF3">
    <property type="entry name" value="LARGE RIBOSOMAL SUBUNIT PROTEIN UL18M"/>
    <property type="match status" value="1"/>
</dbReference>
<dbReference type="Pfam" id="PF00861">
    <property type="entry name" value="Ribosomal_L18p"/>
    <property type="match status" value="1"/>
</dbReference>
<dbReference type="SUPFAM" id="SSF53137">
    <property type="entry name" value="Translational machinery components"/>
    <property type="match status" value="1"/>
</dbReference>